<keyword id="KW-0030">Aminoacyl-tRNA synthetase</keyword>
<keyword id="KW-0067">ATP-binding</keyword>
<keyword id="KW-0963">Cytoplasm</keyword>
<keyword id="KW-0436">Ligase</keyword>
<keyword id="KW-0460">Magnesium</keyword>
<keyword id="KW-0479">Metal-binding</keyword>
<keyword id="KW-0547">Nucleotide-binding</keyword>
<keyword id="KW-0648">Protein biosynthesis</keyword>
<keyword id="KW-1185">Reference proteome</keyword>
<sequence length="493" mass="57858">MKNKKEIYYRKKKLEEMRKNENIFPNNFRQNTTIKNIKKNYKKNDKEYFKNNKIIISIAGRIISIRVMGKSSFLEIRNIESKIQIYISENNISKNKYKKIIKQLDIGDIIGVLGVLFKTNTEELSVKCKKLYVLTKSVKPFPNKFQGLLNQEICYRKRYLDLITNKKSRNTFKTRSIIINNIRKFMIKENFVEVETPMMHNIPGGGLSKPFITHHSSLNIDLYLRIAPELYLKQLIVGGFEKIFEINRNFRNEGLSSNHNPEFTMMEFYVAYIDYEDLMKIVENLLNYIVDKIFNKNKINYNNFMINFEKPFKKISMQDSICEYCKNVTQSDISDIKIITDIAKSFNITVEKNWGVGKLQEKIFSEKVEKNLIQPTFVIDYPTEISPLARAKKNNKLITDRFELFVCGNEIGNGFSELNDPKEQKNRFLEQLKNKTLEEQNIFYDKDYITSLEYGLPPTAGCGIGIDRLVMILTNNYSIKDVILFPTLRNANK</sequence>
<feature type="chain" id="PRO_0000152704" description="Lysine--tRNA ligase">
    <location>
        <begin position="1"/>
        <end position="493"/>
    </location>
</feature>
<feature type="binding site" evidence="1">
    <location>
        <position position="403"/>
    </location>
    <ligand>
        <name>Mg(2+)</name>
        <dbReference type="ChEBI" id="CHEBI:18420"/>
        <label>1</label>
    </ligand>
</feature>
<feature type="binding site" evidence="1">
    <location>
        <position position="410"/>
    </location>
    <ligand>
        <name>Mg(2+)</name>
        <dbReference type="ChEBI" id="CHEBI:18420"/>
        <label>1</label>
    </ligand>
</feature>
<feature type="binding site" evidence="1">
    <location>
        <position position="410"/>
    </location>
    <ligand>
        <name>Mg(2+)</name>
        <dbReference type="ChEBI" id="CHEBI:18420"/>
        <label>2</label>
    </ligand>
</feature>
<evidence type="ECO:0000255" key="1">
    <source>
        <dbReference type="HAMAP-Rule" id="MF_00252"/>
    </source>
</evidence>
<dbReference type="EC" id="6.1.1.6" evidence="1"/>
<dbReference type="EMBL" id="BA000021">
    <property type="protein sequence ID" value="BAC24587.1"/>
    <property type="molecule type" value="Genomic_DNA"/>
</dbReference>
<dbReference type="SMR" id="Q8D2B3"/>
<dbReference type="STRING" id="36870.gene:10368944"/>
<dbReference type="KEGG" id="wbr:lysS"/>
<dbReference type="eggNOG" id="COG1190">
    <property type="taxonomic scope" value="Bacteria"/>
</dbReference>
<dbReference type="HOGENOM" id="CLU_008255_6_2_6"/>
<dbReference type="OrthoDB" id="9762036at2"/>
<dbReference type="Proteomes" id="UP000000562">
    <property type="component" value="Chromosome"/>
</dbReference>
<dbReference type="GO" id="GO:0005829">
    <property type="term" value="C:cytosol"/>
    <property type="evidence" value="ECO:0007669"/>
    <property type="project" value="TreeGrafter"/>
</dbReference>
<dbReference type="GO" id="GO:0005524">
    <property type="term" value="F:ATP binding"/>
    <property type="evidence" value="ECO:0007669"/>
    <property type="project" value="UniProtKB-UniRule"/>
</dbReference>
<dbReference type="GO" id="GO:0004824">
    <property type="term" value="F:lysine-tRNA ligase activity"/>
    <property type="evidence" value="ECO:0007669"/>
    <property type="project" value="UniProtKB-UniRule"/>
</dbReference>
<dbReference type="GO" id="GO:0000287">
    <property type="term" value="F:magnesium ion binding"/>
    <property type="evidence" value="ECO:0007669"/>
    <property type="project" value="UniProtKB-UniRule"/>
</dbReference>
<dbReference type="GO" id="GO:0000049">
    <property type="term" value="F:tRNA binding"/>
    <property type="evidence" value="ECO:0007669"/>
    <property type="project" value="TreeGrafter"/>
</dbReference>
<dbReference type="GO" id="GO:0006430">
    <property type="term" value="P:lysyl-tRNA aminoacylation"/>
    <property type="evidence" value="ECO:0007669"/>
    <property type="project" value="UniProtKB-UniRule"/>
</dbReference>
<dbReference type="CDD" id="cd00775">
    <property type="entry name" value="LysRS_core"/>
    <property type="match status" value="1"/>
</dbReference>
<dbReference type="CDD" id="cd04322">
    <property type="entry name" value="LysRS_N"/>
    <property type="match status" value="1"/>
</dbReference>
<dbReference type="FunFam" id="2.40.50.140:FF:000024">
    <property type="entry name" value="Lysine--tRNA ligase"/>
    <property type="match status" value="1"/>
</dbReference>
<dbReference type="Gene3D" id="3.30.930.10">
    <property type="entry name" value="Bira Bifunctional Protein, Domain 2"/>
    <property type="match status" value="1"/>
</dbReference>
<dbReference type="Gene3D" id="2.40.50.140">
    <property type="entry name" value="Nucleic acid-binding proteins"/>
    <property type="match status" value="1"/>
</dbReference>
<dbReference type="HAMAP" id="MF_00252">
    <property type="entry name" value="Lys_tRNA_synth_class2"/>
    <property type="match status" value="1"/>
</dbReference>
<dbReference type="InterPro" id="IPR004364">
    <property type="entry name" value="Aa-tRNA-synt_II"/>
</dbReference>
<dbReference type="InterPro" id="IPR006195">
    <property type="entry name" value="aa-tRNA-synth_II"/>
</dbReference>
<dbReference type="InterPro" id="IPR045864">
    <property type="entry name" value="aa-tRNA-synth_II/BPL/LPL"/>
</dbReference>
<dbReference type="InterPro" id="IPR002313">
    <property type="entry name" value="Lys-tRNA-ligase_II"/>
</dbReference>
<dbReference type="InterPro" id="IPR044136">
    <property type="entry name" value="Lys-tRNA-ligase_II_N"/>
</dbReference>
<dbReference type="InterPro" id="IPR018149">
    <property type="entry name" value="Lys-tRNA-synth_II_C"/>
</dbReference>
<dbReference type="InterPro" id="IPR012340">
    <property type="entry name" value="NA-bd_OB-fold"/>
</dbReference>
<dbReference type="InterPro" id="IPR004365">
    <property type="entry name" value="NA-bd_OB_tRNA"/>
</dbReference>
<dbReference type="NCBIfam" id="TIGR00499">
    <property type="entry name" value="lysS_bact"/>
    <property type="match status" value="1"/>
</dbReference>
<dbReference type="NCBIfam" id="NF001756">
    <property type="entry name" value="PRK00484.1"/>
    <property type="match status" value="1"/>
</dbReference>
<dbReference type="PANTHER" id="PTHR42918:SF15">
    <property type="entry name" value="LYSINE--TRNA LIGASE, CHLOROPLASTIC_MITOCHONDRIAL"/>
    <property type="match status" value="1"/>
</dbReference>
<dbReference type="PANTHER" id="PTHR42918">
    <property type="entry name" value="LYSYL-TRNA SYNTHETASE"/>
    <property type="match status" value="1"/>
</dbReference>
<dbReference type="Pfam" id="PF00152">
    <property type="entry name" value="tRNA-synt_2"/>
    <property type="match status" value="1"/>
</dbReference>
<dbReference type="Pfam" id="PF01336">
    <property type="entry name" value="tRNA_anti-codon"/>
    <property type="match status" value="1"/>
</dbReference>
<dbReference type="PRINTS" id="PR00982">
    <property type="entry name" value="TRNASYNTHLYS"/>
</dbReference>
<dbReference type="SUPFAM" id="SSF55681">
    <property type="entry name" value="Class II aaRS and biotin synthetases"/>
    <property type="match status" value="1"/>
</dbReference>
<dbReference type="SUPFAM" id="SSF50249">
    <property type="entry name" value="Nucleic acid-binding proteins"/>
    <property type="match status" value="1"/>
</dbReference>
<dbReference type="PROSITE" id="PS50862">
    <property type="entry name" value="AA_TRNA_LIGASE_II"/>
    <property type="match status" value="1"/>
</dbReference>
<name>SYK_WIGBR</name>
<gene>
    <name evidence="1" type="primary">lysS</name>
    <name type="ordered locus">WIGBR4410</name>
</gene>
<organism>
    <name type="scientific">Wigglesworthia glossinidia brevipalpis</name>
    <dbReference type="NCBI Taxonomy" id="36870"/>
    <lineage>
        <taxon>Bacteria</taxon>
        <taxon>Pseudomonadati</taxon>
        <taxon>Pseudomonadota</taxon>
        <taxon>Gammaproteobacteria</taxon>
        <taxon>Enterobacterales</taxon>
        <taxon>Erwiniaceae</taxon>
        <taxon>Wigglesworthia</taxon>
    </lineage>
</organism>
<reference key="1">
    <citation type="journal article" date="2002" name="Nat. Genet.">
        <title>Genome sequence of the endocellular obligate symbiont of tsetse flies, Wigglesworthia glossinidia.</title>
        <authorList>
            <person name="Akman L."/>
            <person name="Yamashita A."/>
            <person name="Watanabe H."/>
            <person name="Oshima K."/>
            <person name="Shiba T."/>
            <person name="Hattori M."/>
            <person name="Aksoy S."/>
        </authorList>
    </citation>
    <scope>NUCLEOTIDE SEQUENCE [LARGE SCALE GENOMIC DNA]</scope>
</reference>
<accession>Q8D2B3</accession>
<protein>
    <recommendedName>
        <fullName evidence="1">Lysine--tRNA ligase</fullName>
        <ecNumber evidence="1">6.1.1.6</ecNumber>
    </recommendedName>
    <alternativeName>
        <fullName evidence="1">Lysyl-tRNA synthetase</fullName>
        <shortName evidence="1">LysRS</shortName>
    </alternativeName>
</protein>
<comment type="catalytic activity">
    <reaction evidence="1">
        <text>tRNA(Lys) + L-lysine + ATP = L-lysyl-tRNA(Lys) + AMP + diphosphate</text>
        <dbReference type="Rhea" id="RHEA:20792"/>
        <dbReference type="Rhea" id="RHEA-COMP:9696"/>
        <dbReference type="Rhea" id="RHEA-COMP:9697"/>
        <dbReference type="ChEBI" id="CHEBI:30616"/>
        <dbReference type="ChEBI" id="CHEBI:32551"/>
        <dbReference type="ChEBI" id="CHEBI:33019"/>
        <dbReference type="ChEBI" id="CHEBI:78442"/>
        <dbReference type="ChEBI" id="CHEBI:78529"/>
        <dbReference type="ChEBI" id="CHEBI:456215"/>
        <dbReference type="EC" id="6.1.1.6"/>
    </reaction>
</comment>
<comment type="cofactor">
    <cofactor evidence="1">
        <name>Mg(2+)</name>
        <dbReference type="ChEBI" id="CHEBI:18420"/>
    </cofactor>
    <text evidence="1">Binds 3 Mg(2+) ions per subunit.</text>
</comment>
<comment type="subunit">
    <text evidence="1">Homodimer.</text>
</comment>
<comment type="subcellular location">
    <subcellularLocation>
        <location evidence="1">Cytoplasm</location>
    </subcellularLocation>
</comment>
<comment type="similarity">
    <text evidence="1">Belongs to the class-II aminoacyl-tRNA synthetase family.</text>
</comment>
<proteinExistence type="inferred from homology"/>